<evidence type="ECO:0000250" key="1">
    <source>
        <dbReference type="UniProtKB" id="Q04571"/>
    </source>
</evidence>
<evidence type="ECO:0000255" key="2"/>
<evidence type="ECO:0000255" key="3">
    <source>
        <dbReference type="PROSITE-ProRule" id="PRU00498"/>
    </source>
</evidence>
<evidence type="ECO:0000269" key="4">
    <source>
    </source>
</evidence>
<evidence type="ECO:0000303" key="5">
    <source>
    </source>
</evidence>
<evidence type="ECO:0000305" key="6"/>
<gene>
    <name evidence="5" type="primary">hyd1</name>
    <name type="ORF">CC1G_09189</name>
</gene>
<sequence length="118" mass="12110">MFARLSTALLAFTLATAVVAAPGGRPSEVEYEQCNGGEIQCCNSYQKADSLDYNTSKLLGLLNIDVKQITAGVGLTCTGINAVGIGGGSSCTQQKVCCTNNKFNGVVALGCSPINVSL</sequence>
<reference key="1">
    <citation type="journal article" date="2010" name="Proc. Natl. Acad. Sci. U.S.A.">
        <title>Insights into evolution of multicellular fungi from the assembled chromosomes of the mushroom Coprinopsis cinerea (Coprinus cinereus).</title>
        <authorList>
            <person name="Stajich J.E."/>
            <person name="Wilke S.K."/>
            <person name="Ahren D."/>
            <person name="Au C.H."/>
            <person name="Birren B.W."/>
            <person name="Borodovsky M."/>
            <person name="Burns C."/>
            <person name="Canbaeck B."/>
            <person name="Casselton L.A."/>
            <person name="Cheng C.K."/>
            <person name="Deng J."/>
            <person name="Dietrich F.S."/>
            <person name="Fargo D.C."/>
            <person name="Farman M.L."/>
            <person name="Gathman A.C."/>
            <person name="Goldberg J."/>
            <person name="Guigo R."/>
            <person name="Hoegger P.J."/>
            <person name="Hooker J.B."/>
            <person name="Huggins A."/>
            <person name="James T.Y."/>
            <person name="Kamada T."/>
            <person name="Kilaru S."/>
            <person name="Kodira C."/>
            <person name="Kuees U."/>
            <person name="Kupfer D."/>
            <person name="Kwan H.S."/>
            <person name="Lomsadze A."/>
            <person name="Li W."/>
            <person name="Lilly W.W."/>
            <person name="Ma L.-J."/>
            <person name="Mackey A.J."/>
            <person name="Manning G."/>
            <person name="Martin F."/>
            <person name="Muraguchi H."/>
            <person name="Natvig D.O."/>
            <person name="Palmerini H."/>
            <person name="Ramesh M.A."/>
            <person name="Rehmeyer C.J."/>
            <person name="Roe B.A."/>
            <person name="Shenoy N."/>
            <person name="Stanke M."/>
            <person name="Ter-Hovhannisyan V."/>
            <person name="Tunlid A."/>
            <person name="Velagapudi R."/>
            <person name="Vision T.J."/>
            <person name="Zeng Q."/>
            <person name="Zolan M.E."/>
            <person name="Pukkila P.J."/>
        </authorList>
    </citation>
    <scope>NUCLEOTIDE SEQUENCE [LARGE SCALE GENOMIC DNA]</scope>
    <scope>IDENTIFICATION</scope>
    <source>
        <strain>Okayama-7 / 130 / ATCC MYA-4618 / FGSC 9003</strain>
    </source>
</reference>
<reference key="2">
    <citation type="journal article" date="2021" name="MBio">
        <title>Molecular Mechanism by Which the GATA Transcription Factor CcNsdD2 Regulates the Developmental Fate of Coprinopsis cinerea under Dark or Light Conditions.</title>
        <authorList>
            <person name="Liu C."/>
            <person name="Kang L."/>
            <person name="Lin M."/>
            <person name="Bi J."/>
            <person name="Liu Z."/>
            <person name="Yuan S."/>
        </authorList>
    </citation>
    <scope>INDUCTION</scope>
</reference>
<organism>
    <name type="scientific">Coprinopsis cinerea (strain Okayama-7 / 130 / ATCC MYA-4618 / FGSC 9003)</name>
    <name type="common">Inky cap fungus</name>
    <name type="synonym">Hormographiella aspergillata</name>
    <dbReference type="NCBI Taxonomy" id="240176"/>
    <lineage>
        <taxon>Eukaryota</taxon>
        <taxon>Fungi</taxon>
        <taxon>Dikarya</taxon>
        <taxon>Basidiomycota</taxon>
        <taxon>Agaricomycotina</taxon>
        <taxon>Agaricomycetes</taxon>
        <taxon>Agaricomycetidae</taxon>
        <taxon>Agaricales</taxon>
        <taxon>Agaricineae</taxon>
        <taxon>Psathyrellaceae</taxon>
        <taxon>Coprinopsis</taxon>
    </lineage>
</organism>
<proteinExistence type="evidence at transcript level"/>
<keyword id="KW-0134">Cell wall</keyword>
<keyword id="KW-1015">Disulfide bond</keyword>
<keyword id="KW-0325">Glycoprotein</keyword>
<keyword id="KW-1185">Reference proteome</keyword>
<keyword id="KW-0964">Secreted</keyword>
<keyword id="KW-0732">Signal</keyword>
<accession>A8P9W4</accession>
<feature type="signal peptide" evidence="2">
    <location>
        <begin position="1"/>
        <end position="20"/>
    </location>
</feature>
<feature type="chain" id="PRO_5013987205" description="Class I hydrophobin 1">
    <location>
        <begin position="21"/>
        <end position="118"/>
    </location>
</feature>
<feature type="glycosylation site" description="N-linked (GlcNAc...) asparagine" evidence="3">
    <location>
        <position position="54"/>
    </location>
</feature>
<feature type="glycosylation site" description="N-linked (GlcNAc...) asparagine" evidence="3">
    <location>
        <position position="115"/>
    </location>
</feature>
<feature type="disulfide bond" evidence="1">
    <location>
        <begin position="34"/>
        <end position="97"/>
    </location>
</feature>
<feature type="disulfide bond" evidence="1">
    <location>
        <begin position="41"/>
        <end position="91"/>
    </location>
</feature>
<feature type="disulfide bond" evidence="1">
    <location>
        <begin position="42"/>
        <end position="77"/>
    </location>
</feature>
<feature type="disulfide bond" evidence="1">
    <location>
        <begin position="98"/>
        <end position="111"/>
    </location>
</feature>
<comment type="function">
    <text evidence="6">Aerial growth, conidiation, and dispersal of filamentous fungi in the environment rely upon a capability of their secreting small amphipathic proteins called hydrophobins (HPBs) with low sequence identity. Class I can self-assemble into an outermost layer of rodlet bundles on aerial cell surfaces, conferring cellular hydrophobicity that supports fungal growth, development and dispersal; whereas Class II form highly ordered films at water-air interfaces through intermolecular interactions but contribute nothing to the rodlet structure.</text>
</comment>
<comment type="subunit">
    <text evidence="1">Self-assembles to form functional amyloid fibrils called rodlets. Self-assembly into fibrillar rodlets occurs spontaneously at hydrophobic:hydrophilic interfaces and the rodlets further associate laterally to form amphipathic monolayers.</text>
</comment>
<comment type="subcellular location">
    <subcellularLocation>
        <location>Secreted</location>
    </subcellularLocation>
    <subcellularLocation>
        <location>Secreted</location>
        <location>Cell wall</location>
    </subcellularLocation>
</comment>
<comment type="induction">
    <text evidence="4">Expression is light-dependent and positiveley regulated by the GATA transcription factor nsdD2 that binds promoter regulatory sequences containing a GATC motif.</text>
</comment>
<comment type="similarity">
    <text evidence="6">Belongs to the fungal hydrophobin family.</text>
</comment>
<dbReference type="EMBL" id="AACS02000002">
    <property type="protein sequence ID" value="EAU82003.1"/>
    <property type="molecule type" value="Genomic_DNA"/>
</dbReference>
<dbReference type="RefSeq" id="XP_001839855.1">
    <property type="nucleotide sequence ID" value="XM_001839803.2"/>
</dbReference>
<dbReference type="STRING" id="240176.A8P9W4"/>
<dbReference type="GeneID" id="6016477"/>
<dbReference type="KEGG" id="cci:CC1G_09189"/>
<dbReference type="VEuPathDB" id="FungiDB:CC1G_09189"/>
<dbReference type="InParanoid" id="A8P9W4"/>
<dbReference type="OMA" id="SIQCCNA"/>
<dbReference type="OrthoDB" id="4225815at2759"/>
<dbReference type="Proteomes" id="UP000001861">
    <property type="component" value="Unassembled WGS sequence"/>
</dbReference>
<dbReference type="GO" id="GO:0005576">
    <property type="term" value="C:extracellular region"/>
    <property type="evidence" value="ECO:0007669"/>
    <property type="project" value="UniProtKB-KW"/>
</dbReference>
<dbReference type="GO" id="GO:0009277">
    <property type="term" value="C:fungal-type cell wall"/>
    <property type="evidence" value="ECO:0007669"/>
    <property type="project" value="InterPro"/>
</dbReference>
<dbReference type="GO" id="GO:0005199">
    <property type="term" value="F:structural constituent of cell wall"/>
    <property type="evidence" value="ECO:0007669"/>
    <property type="project" value="InterPro"/>
</dbReference>
<dbReference type="CDD" id="cd23507">
    <property type="entry name" value="hydrophobin_I"/>
    <property type="match status" value="1"/>
</dbReference>
<dbReference type="InterPro" id="IPR001338">
    <property type="entry name" value="Hydrophobin"/>
</dbReference>
<dbReference type="Pfam" id="PF01185">
    <property type="entry name" value="Hydrophobin"/>
    <property type="match status" value="1"/>
</dbReference>
<dbReference type="SMART" id="SM00075">
    <property type="entry name" value="HYDRO"/>
    <property type="match status" value="1"/>
</dbReference>
<protein>
    <recommendedName>
        <fullName evidence="5">Class I hydrophobin 1</fullName>
    </recommendedName>
</protein>
<name>HYD1_COPC7</name>